<organism>
    <name type="scientific">Thermoplasma acidophilum (strain ATCC 25905 / DSM 1728 / JCM 9062 / NBRC 15155 / AMRC-C165)</name>
    <dbReference type="NCBI Taxonomy" id="273075"/>
    <lineage>
        <taxon>Archaea</taxon>
        <taxon>Methanobacteriati</taxon>
        <taxon>Thermoplasmatota</taxon>
        <taxon>Thermoplasmata</taxon>
        <taxon>Thermoplasmatales</taxon>
        <taxon>Thermoplasmataceae</taxon>
        <taxon>Thermoplasma</taxon>
    </lineage>
</organism>
<reference key="1">
    <citation type="submission" date="2011-07" db="EMBL/GenBank/DDBJ databases">
        <title>Characterization of NADP-specific L-rhamnose dehydrogenase from the hyperthermophilic archaeon Thermoplasma acidophilum.</title>
        <authorList>
            <person name="Kim S.M."/>
            <person name="Paek K.H."/>
            <person name="Lee S.B."/>
        </authorList>
    </citation>
    <scope>NUCLEOTIDE SEQUENCE [GENOMIC DNA]</scope>
    <source>
        <strain>ATCC 25905 / DSM 1728 / JCM 9062 / NBRC 15155 / AMRC-C165</strain>
    </source>
</reference>
<reference key="2">
    <citation type="journal article" date="2000" name="Nature">
        <title>The genome sequence of the thermoacidophilic scavenger Thermoplasma acidophilum.</title>
        <authorList>
            <person name="Ruepp A."/>
            <person name="Graml W."/>
            <person name="Santos-Martinez M.-L."/>
            <person name="Koretke K.K."/>
            <person name="Volker C."/>
            <person name="Mewes H.-W."/>
            <person name="Frishman D."/>
            <person name="Stocker S."/>
            <person name="Lupas A.N."/>
            <person name="Baumeister W."/>
        </authorList>
    </citation>
    <scope>NUCLEOTIDE SEQUENCE [LARGE SCALE GENOMIC DNA]</scope>
    <source>
        <strain>ATCC 25905 / DSM 1728 / JCM 9062 / NBRC 15155 / AMRC-C165</strain>
    </source>
</reference>
<reference key="3">
    <citation type="journal article" date="2012" name="Extremophiles">
        <title>Characterization of NADP+-specific L-rhamnose dehydrogenase from the thermoacidophilic Archaeon Thermoplasma acidophilum.</title>
        <authorList>
            <person name="Kim S.M."/>
            <person name="Paek K.H."/>
            <person name="Lee S.B."/>
        </authorList>
    </citation>
    <scope>FUNCTION</scope>
    <scope>CATALYTIC ACTIVITY</scope>
    <scope>BIOPHYSICOCHEMICAL PROPERTIES</scope>
    <source>
        <strain>ATCC 25905 / DSM 1728 / JCM 9062 / NBRC 15155 / AMRC-C165</strain>
    </source>
</reference>
<proteinExistence type="evidence at protein level"/>
<dbReference type="EC" id="1.1.1.377" evidence="4"/>
<dbReference type="EMBL" id="JN375693">
    <property type="protein sequence ID" value="AEN94562.1"/>
    <property type="molecule type" value="Genomic_DNA"/>
</dbReference>
<dbReference type="EMBL" id="AL445065">
    <property type="protein sequence ID" value="CAC11881.1"/>
    <property type="status" value="ALT_INIT"/>
    <property type="molecule type" value="Genomic_DNA"/>
</dbReference>
<dbReference type="RefSeq" id="WP_048161762.1">
    <property type="nucleotide sequence ID" value="NC_002578.1"/>
</dbReference>
<dbReference type="SMR" id="Q9HK58"/>
<dbReference type="STRING" id="273075.gene:9571963"/>
<dbReference type="PaxDb" id="273075-Ta0747"/>
<dbReference type="EnsemblBacteria" id="CAC11881">
    <property type="protein sequence ID" value="CAC11881"/>
    <property type="gene ID" value="CAC11881"/>
</dbReference>
<dbReference type="KEGG" id="tac:Ta0747"/>
<dbReference type="eggNOG" id="arCOG01259">
    <property type="taxonomic scope" value="Archaea"/>
</dbReference>
<dbReference type="HOGENOM" id="CLU_010194_1_1_2"/>
<dbReference type="InParanoid" id="Q9HK58"/>
<dbReference type="OrthoDB" id="24596at2157"/>
<dbReference type="BRENDA" id="1.1.1.377">
    <property type="organism ID" value="6324"/>
</dbReference>
<dbReference type="UniPathway" id="UPA00541"/>
<dbReference type="Proteomes" id="UP000001024">
    <property type="component" value="Chromosome"/>
</dbReference>
<dbReference type="GO" id="GO:0016616">
    <property type="term" value="F:oxidoreductase activity, acting on the CH-OH group of donors, NAD or NADP as acceptor"/>
    <property type="evidence" value="ECO:0000314"/>
    <property type="project" value="UniProtKB"/>
</dbReference>
<dbReference type="GO" id="GO:0048038">
    <property type="term" value="F:quinone binding"/>
    <property type="evidence" value="ECO:0007669"/>
    <property type="project" value="TreeGrafter"/>
</dbReference>
<dbReference type="GO" id="GO:0006633">
    <property type="term" value="P:fatty acid biosynthetic process"/>
    <property type="evidence" value="ECO:0007669"/>
    <property type="project" value="TreeGrafter"/>
</dbReference>
<dbReference type="GO" id="GO:0019301">
    <property type="term" value="P:rhamnose catabolic process"/>
    <property type="evidence" value="ECO:0000314"/>
    <property type="project" value="UniProtKB"/>
</dbReference>
<dbReference type="CDD" id="cd05233">
    <property type="entry name" value="SDR_c"/>
    <property type="match status" value="1"/>
</dbReference>
<dbReference type="FunFam" id="3.40.50.720:FF:000417">
    <property type="entry name" value="Glucose 1-dehydrogenase, putative"/>
    <property type="match status" value="1"/>
</dbReference>
<dbReference type="Gene3D" id="3.40.50.720">
    <property type="entry name" value="NAD(P)-binding Rossmann-like Domain"/>
    <property type="match status" value="1"/>
</dbReference>
<dbReference type="InterPro" id="IPR053690">
    <property type="entry name" value="L-rhamnose_1-dehydrogenase"/>
</dbReference>
<dbReference type="InterPro" id="IPR036291">
    <property type="entry name" value="NAD(P)-bd_dom_sf"/>
</dbReference>
<dbReference type="InterPro" id="IPR020904">
    <property type="entry name" value="Sc_DH/Rdtase_CS"/>
</dbReference>
<dbReference type="InterPro" id="IPR002347">
    <property type="entry name" value="SDR_fam"/>
</dbReference>
<dbReference type="NCBIfam" id="NF041159">
    <property type="entry name" value="Rham_dhyd_Thplmales"/>
    <property type="match status" value="1"/>
</dbReference>
<dbReference type="PANTHER" id="PTHR42760:SF83">
    <property type="entry name" value="(3R)-3-HYDROXYACYL-COA DEHYDROGENASE"/>
    <property type="match status" value="1"/>
</dbReference>
<dbReference type="PANTHER" id="PTHR42760">
    <property type="entry name" value="SHORT-CHAIN DEHYDROGENASES/REDUCTASES FAMILY MEMBER"/>
    <property type="match status" value="1"/>
</dbReference>
<dbReference type="Pfam" id="PF13561">
    <property type="entry name" value="adh_short_C2"/>
    <property type="match status" value="1"/>
</dbReference>
<dbReference type="PRINTS" id="PR00081">
    <property type="entry name" value="GDHRDH"/>
</dbReference>
<dbReference type="PRINTS" id="PR00080">
    <property type="entry name" value="SDRFAMILY"/>
</dbReference>
<dbReference type="SUPFAM" id="SSF51735">
    <property type="entry name" value="NAD(P)-binding Rossmann-fold domains"/>
    <property type="match status" value="1"/>
</dbReference>
<dbReference type="PROSITE" id="PS00061">
    <property type="entry name" value="ADH_SHORT"/>
    <property type="match status" value="1"/>
</dbReference>
<name>RHAD_THEAC</name>
<feature type="chain" id="PRO_0000431250" description="L-rhamnose 1-dehydrogenase (NADP(+))">
    <location>
        <begin position="1"/>
        <end position="254"/>
    </location>
</feature>
<feature type="active site" description="Proton donor" evidence="2">
    <location>
        <position position="144"/>
    </location>
</feature>
<feature type="active site" description="Proton acceptor" evidence="3">
    <location>
        <position position="157"/>
    </location>
</feature>
<feature type="active site" description="Lowers pKa of active site Tyr" evidence="2">
    <location>
        <position position="161"/>
    </location>
</feature>
<feature type="binding site" evidence="1">
    <location>
        <position position="13"/>
    </location>
    <ligand>
        <name>NADP(+)</name>
        <dbReference type="ChEBI" id="CHEBI:58349"/>
    </ligand>
</feature>
<feature type="binding site" evidence="1">
    <location>
        <position position="15"/>
    </location>
    <ligand>
        <name>NADP(+)</name>
        <dbReference type="ChEBI" id="CHEBI:58349"/>
    </ligand>
</feature>
<feature type="binding site" evidence="1">
    <location>
        <position position="16"/>
    </location>
    <ligand>
        <name>NADP(+)</name>
        <dbReference type="ChEBI" id="CHEBI:58349"/>
    </ligand>
</feature>
<feature type="binding site" evidence="1">
    <location>
        <position position="18"/>
    </location>
    <ligand>
        <name>NADP(+)</name>
        <dbReference type="ChEBI" id="CHEBI:58349"/>
    </ligand>
</feature>
<feature type="binding site" evidence="1">
    <location>
        <position position="64"/>
    </location>
    <ligand>
        <name>NADP(+)</name>
        <dbReference type="ChEBI" id="CHEBI:58349"/>
    </ligand>
</feature>
<feature type="binding site" evidence="1">
    <location>
        <position position="91"/>
    </location>
    <ligand>
        <name>NADP(+)</name>
        <dbReference type="ChEBI" id="CHEBI:58349"/>
    </ligand>
</feature>
<feature type="binding site" evidence="1">
    <location>
        <position position="144"/>
    </location>
    <ligand>
        <name>beta-L-rhamnose</name>
        <dbReference type="ChEBI" id="CHEBI:27586"/>
    </ligand>
</feature>
<feature type="binding site" evidence="1">
    <location>
        <position position="146"/>
    </location>
    <ligand>
        <name>beta-L-rhamnose</name>
        <dbReference type="ChEBI" id="CHEBI:27586"/>
    </ligand>
</feature>
<feature type="binding site" evidence="1">
    <location>
        <position position="154"/>
    </location>
    <ligand>
        <name>beta-L-rhamnose</name>
        <dbReference type="ChEBI" id="CHEBI:27586"/>
    </ligand>
</feature>
<feature type="binding site" evidence="1">
    <location>
        <position position="157"/>
    </location>
    <ligand>
        <name>beta-L-rhamnose</name>
        <dbReference type="ChEBI" id="CHEBI:27586"/>
    </ligand>
</feature>
<feature type="binding site" evidence="1">
    <location>
        <position position="157"/>
    </location>
    <ligand>
        <name>NADP(+)</name>
        <dbReference type="ChEBI" id="CHEBI:58349"/>
    </ligand>
</feature>
<feature type="binding site" evidence="1">
    <location>
        <position position="161"/>
    </location>
    <ligand>
        <name>NADP(+)</name>
        <dbReference type="ChEBI" id="CHEBI:58349"/>
    </ligand>
</feature>
<feature type="binding site" evidence="1">
    <location>
        <position position="189"/>
    </location>
    <ligand>
        <name>beta-L-rhamnose</name>
        <dbReference type="ChEBI" id="CHEBI:27586"/>
    </ligand>
</feature>
<feature type="binding site" evidence="1">
    <location>
        <position position="190"/>
    </location>
    <ligand>
        <name>NADP(+)</name>
        <dbReference type="ChEBI" id="CHEBI:58349"/>
    </ligand>
</feature>
<feature type="binding site" evidence="1">
    <location>
        <position position="195"/>
    </location>
    <ligand>
        <name>beta-L-rhamnose</name>
        <dbReference type="ChEBI" id="CHEBI:27586"/>
    </ligand>
</feature>
<feature type="site" description="Important for NADP specificity" evidence="5">
    <location>
        <position position="16"/>
    </location>
</feature>
<accession>Q9HK58</accession>
<accession>G3LGQ3</accession>
<comment type="function">
    <text evidence="4">Involved in the non-phosphorylated metabolic pathway of L-rhamnose catabolism. Catalyzes the oxidation of L-rhamnose to yield L-rhamnono-1,4-lactone. It can also oxidize L-lyxose and L-mannose, and uses only NADP.</text>
</comment>
<comment type="catalytic activity">
    <reaction evidence="4">
        <text>L-rhamnofuranose + NADP(+) = L-rhamnono-1,4-lactone + NADPH + H(+)</text>
        <dbReference type="Rhea" id="RHEA:42668"/>
        <dbReference type="ChEBI" id="CHEBI:15378"/>
        <dbReference type="ChEBI" id="CHEBI:16935"/>
        <dbReference type="ChEBI" id="CHEBI:17937"/>
        <dbReference type="ChEBI" id="CHEBI:57783"/>
        <dbReference type="ChEBI" id="CHEBI:58349"/>
        <dbReference type="EC" id="1.1.1.377"/>
    </reaction>
</comment>
<comment type="biophysicochemical properties">
    <kinetics>
        <KM evidence="4">0.1 mM for NADP (at pH 7 and 60 degrees Celsius)</KM>
        <KM evidence="4">0.46 mM for L-rhamnose (at pH 7 and 60 degrees Celsius)</KM>
        <KM evidence="4">1.37 mM for L-lyxose (at pH 7 and 60 degrees Celsius)</KM>
        <KM evidence="4">6.74 mM for L-mannose (at pH 7 and 60 degrees Celsius)</KM>
        <text evidence="4">kcat is 1.341 min(-1) for dehydrogenase activity with L-rhamnose as substrate (at pH 7 and 60 degrees Celsius). kcat is 1.426 min(-1) for dehydrogenase activity with L-lyxose as substrate (at pH 7 and 60 degrees Celsius). kcat is 892.9 min(-1) for dehydrogenase activity with L-mannose as substrate (at pH 7 and 60 degrees Celsius).</text>
    </kinetics>
    <phDependence>
        <text evidence="4">Optimum pH is 7.</text>
    </phDependence>
    <temperatureDependence>
        <text evidence="4">Optimum temperature is 60 degrees Celsius.</text>
    </temperatureDependence>
</comment>
<comment type="pathway">
    <text evidence="6">Carbohydrate degradation; L-rhamnose degradation.</text>
</comment>
<comment type="similarity">
    <text evidence="6">Belongs to the short-chain dehydrogenases/reductases (SDR) family.</text>
</comment>
<comment type="sequence caution" evidence="6">
    <conflict type="erroneous initiation">
        <sequence resource="EMBL-CDS" id="CAC11881"/>
    </conflict>
    <text>Truncated N-terminus.</text>
</comment>
<gene>
    <name evidence="5" type="primary">rhaD</name>
    <name type="ordered locus">Ta0747</name>
    <name type="ORF">Ta0747P</name>
</gene>
<protein>
    <recommendedName>
        <fullName evidence="5">L-rhamnose 1-dehydrogenase (NADP(+))</fullName>
        <shortName evidence="5">RHAD</shortName>
        <ecNumber evidence="4">1.1.1.377</ecNumber>
    </recommendedName>
</protein>
<evidence type="ECO:0000250" key="1">
    <source>
        <dbReference type="UniProtKB" id="C1DMX5"/>
    </source>
</evidence>
<evidence type="ECO:0000250" key="2">
    <source>
        <dbReference type="UniProtKB" id="O93868"/>
    </source>
</evidence>
<evidence type="ECO:0000255" key="3">
    <source>
        <dbReference type="PROSITE-ProRule" id="PRU10001"/>
    </source>
</evidence>
<evidence type="ECO:0000269" key="4">
    <source>
    </source>
</evidence>
<evidence type="ECO:0000303" key="5">
    <source>
    </source>
</evidence>
<evidence type="ECO:0000305" key="6"/>
<keyword id="KW-0521">NADP</keyword>
<keyword id="KW-0560">Oxidoreductase</keyword>
<keyword id="KW-1185">Reference proteome</keyword>
<keyword id="KW-0684">Rhamnose metabolism</keyword>
<sequence>MLDFKGKNAVITGGSRGIGRAIALGLAKQGANILISYASHDSEADEVLETASKYGVKAHKVKVDQSDPYESIRFAEKAIETFGKVHILVDNAGICPFEDFFRISVDLFEKVWKVNVESHYFITQRIAKNMIENKINGRILLISSISAHVGGEFQTHYTTTKSALNGFMHSIAIVLGKYGILVNSLEPGTILTDINKEDLSNQEKRAYMERRTVVGRLGLPEDMVAPALFLLSDDNTYVTGTELLADGGMLINLQ</sequence>